<keyword id="KW-0963">Cytoplasm</keyword>
<keyword id="KW-0539">Nucleus</keyword>
<keyword id="KW-1185">Reference proteome</keyword>
<keyword id="KW-0694">RNA-binding</keyword>
<organism>
    <name type="scientific">Xenopus laevis</name>
    <name type="common">African clawed frog</name>
    <dbReference type="NCBI Taxonomy" id="8355"/>
    <lineage>
        <taxon>Eukaryota</taxon>
        <taxon>Metazoa</taxon>
        <taxon>Chordata</taxon>
        <taxon>Craniata</taxon>
        <taxon>Vertebrata</taxon>
        <taxon>Euteleostomi</taxon>
        <taxon>Amphibia</taxon>
        <taxon>Batrachia</taxon>
        <taxon>Anura</taxon>
        <taxon>Pipoidea</taxon>
        <taxon>Pipidae</taxon>
        <taxon>Xenopodinae</taxon>
        <taxon>Xenopus</taxon>
        <taxon>Xenopus</taxon>
    </lineage>
</organism>
<comment type="function">
    <text evidence="1">May bind RNA.</text>
</comment>
<comment type="subcellular location">
    <subcellularLocation>
        <location evidence="1">Nucleus</location>
    </subcellularLocation>
    <subcellularLocation>
        <location evidence="1">Cytoplasm</location>
    </subcellularLocation>
</comment>
<comment type="similarity">
    <text evidence="3">Belongs to the RRM RBM42 family.</text>
</comment>
<accession>A2VDB3</accession>
<protein>
    <recommendedName>
        <fullName>RNA-binding protein 42</fullName>
    </recommendedName>
    <alternativeName>
        <fullName>RNA-binding motif protein 42</fullName>
    </alternativeName>
</protein>
<name>RBM42_XENLA</name>
<dbReference type="EMBL" id="BC129697">
    <property type="protein sequence ID" value="AAI29698.1"/>
    <property type="molecule type" value="mRNA"/>
</dbReference>
<dbReference type="RefSeq" id="NP_001091367.1">
    <property type="nucleotide sequence ID" value="NM_001097898.1"/>
</dbReference>
<dbReference type="SMR" id="A2VDB3"/>
<dbReference type="DNASU" id="100037209"/>
<dbReference type="GeneID" id="100037209"/>
<dbReference type="KEGG" id="xla:100037209"/>
<dbReference type="AGR" id="Xenbase:XB-GENE-5896841"/>
<dbReference type="CTD" id="100037209"/>
<dbReference type="Xenbase" id="XB-GENE-5896841">
    <property type="gene designation" value="rbm42.S"/>
</dbReference>
<dbReference type="OrthoDB" id="1749473at2759"/>
<dbReference type="Proteomes" id="UP000186698">
    <property type="component" value="Chromosome 7S"/>
</dbReference>
<dbReference type="Bgee" id="100037209">
    <property type="expression patterns" value="Expressed in testis and 19 other cell types or tissues"/>
</dbReference>
<dbReference type="GO" id="GO:0005737">
    <property type="term" value="C:cytoplasm"/>
    <property type="evidence" value="ECO:0007669"/>
    <property type="project" value="UniProtKB-SubCell"/>
</dbReference>
<dbReference type="GO" id="GO:0005634">
    <property type="term" value="C:nucleus"/>
    <property type="evidence" value="ECO:0007669"/>
    <property type="project" value="UniProtKB-SubCell"/>
</dbReference>
<dbReference type="GO" id="GO:0003729">
    <property type="term" value="F:mRNA binding"/>
    <property type="evidence" value="ECO:0000318"/>
    <property type="project" value="GO_Central"/>
</dbReference>
<dbReference type="CDD" id="cd12383">
    <property type="entry name" value="RRM_RBM42"/>
    <property type="match status" value="1"/>
</dbReference>
<dbReference type="FunFam" id="3.30.70.330:FF:000189">
    <property type="entry name" value="RNA-binding protein 42 isoform X2"/>
    <property type="match status" value="1"/>
</dbReference>
<dbReference type="Gene3D" id="3.30.70.330">
    <property type="match status" value="1"/>
</dbReference>
<dbReference type="InterPro" id="IPR012677">
    <property type="entry name" value="Nucleotide-bd_a/b_plait_sf"/>
</dbReference>
<dbReference type="InterPro" id="IPR035979">
    <property type="entry name" value="RBD_domain_sf"/>
</dbReference>
<dbReference type="InterPro" id="IPR050825">
    <property type="entry name" value="RBM42_RBP45_47-like"/>
</dbReference>
<dbReference type="InterPro" id="IPR034215">
    <property type="entry name" value="RBM42_RRM"/>
</dbReference>
<dbReference type="InterPro" id="IPR000504">
    <property type="entry name" value="RRM_dom"/>
</dbReference>
<dbReference type="PANTHER" id="PTHR47640:SF11">
    <property type="entry name" value="RNA-BINDING PROTEIN 42"/>
    <property type="match status" value="1"/>
</dbReference>
<dbReference type="PANTHER" id="PTHR47640">
    <property type="entry name" value="TRNA SELENOCYSTEINE 1-ASSOCIATED PROTEIN 1-RELATED-RELATED"/>
    <property type="match status" value="1"/>
</dbReference>
<dbReference type="Pfam" id="PF00076">
    <property type="entry name" value="RRM_1"/>
    <property type="match status" value="1"/>
</dbReference>
<dbReference type="SMART" id="SM00360">
    <property type="entry name" value="RRM"/>
    <property type="match status" value="1"/>
</dbReference>
<dbReference type="SUPFAM" id="SSF54928">
    <property type="entry name" value="RNA-binding domain, RBD"/>
    <property type="match status" value="1"/>
</dbReference>
<dbReference type="PROSITE" id="PS50102">
    <property type="entry name" value="RRM"/>
    <property type="match status" value="1"/>
</dbReference>
<sequence length="392" mass="43464">MAGKSGEEKMKEMEAEMALFEQEVLGAPVAPSPVDPVPLSIQAVPIIRPVIATNTYSQVQQSLQARAAAAASVVGPNFVSPVTFVGPAIPPPRPPVMRPSFIPHALQRPIEPHGAMTRPSFIPHVLQHRAPGPRHPGMPPLQPLMAHHMHGPPPPLMRHIPPPPLGMRPGPPPAPMGPLPPPPRPMVQSAPKINPTVIQAAPTVYTAPPVRKPEEEIVEPPIIPEEKESLSYEETVIGPSMPEIEPVQPEVVLEPVQEDKKKAKPEKLKRCIRTAAGTSWEDQSLLEWEPDDFRIFCGDLGNEVNDDILARAFSRYPSFLRAKVIRDKRTGKTKGYGFVSFKDPNDYVRATREMNGKYVGSRPIKLRKSQWKDRNIDVVRKKQREKKKLGLR</sequence>
<proteinExistence type="evidence at transcript level"/>
<evidence type="ECO:0000250" key="1"/>
<evidence type="ECO:0000255" key="2">
    <source>
        <dbReference type="PROSITE-ProRule" id="PRU00176"/>
    </source>
</evidence>
<evidence type="ECO:0000305" key="3"/>
<feature type="chain" id="PRO_0000307754" description="RNA-binding protein 42">
    <location>
        <begin position="1"/>
        <end position="392"/>
    </location>
</feature>
<feature type="domain" description="RRM" evidence="2">
    <location>
        <begin position="293"/>
        <end position="371"/>
    </location>
</feature>
<reference key="1">
    <citation type="submission" date="2006-12" db="EMBL/GenBank/DDBJ databases">
        <authorList>
            <consortium name="NIH - Xenopus Gene Collection (XGC) project"/>
        </authorList>
    </citation>
    <scope>NUCLEOTIDE SEQUENCE [LARGE SCALE MRNA]</scope>
    <source>
        <tissue>Tail</tissue>
    </source>
</reference>
<gene>
    <name type="primary">rbm42</name>
</gene>